<comment type="function">
    <text evidence="1">Involved in DNA repair and RecF pathway recombination.</text>
</comment>
<comment type="similarity">
    <text evidence="2">Belongs to the RecO family.</text>
</comment>
<comment type="sequence caution" evidence="2">
    <conflict type="erroneous initiation">
        <sequence resource="EMBL-CDS" id="AAK79267"/>
    </conflict>
</comment>
<organism>
    <name type="scientific">Clostridium acetobutylicum (strain ATCC 824 / DSM 792 / JCM 1419 / IAM 19013 / LMG 5710 / NBRC 13948 / NRRL B-527 / VKM B-1787 / 2291 / W)</name>
    <dbReference type="NCBI Taxonomy" id="272562"/>
    <lineage>
        <taxon>Bacteria</taxon>
        <taxon>Bacillati</taxon>
        <taxon>Bacillota</taxon>
        <taxon>Clostridia</taxon>
        <taxon>Eubacteriales</taxon>
        <taxon>Clostridiaceae</taxon>
        <taxon>Clostridium</taxon>
    </lineage>
</organism>
<reference key="1">
    <citation type="journal article" date="2001" name="J. Bacteriol.">
        <title>Genome sequence and comparative analysis of the solvent-producing bacterium Clostridium acetobutylicum.</title>
        <authorList>
            <person name="Noelling J."/>
            <person name="Breton G."/>
            <person name="Omelchenko M.V."/>
            <person name="Makarova K.S."/>
            <person name="Zeng Q."/>
            <person name="Gibson R."/>
            <person name="Lee H.M."/>
            <person name="Dubois J."/>
            <person name="Qiu D."/>
            <person name="Hitti J."/>
            <person name="Wolf Y.I."/>
            <person name="Tatusov R.L."/>
            <person name="Sabathe F."/>
            <person name="Doucette-Stamm L.A."/>
            <person name="Soucaille P."/>
            <person name="Daly M.J."/>
            <person name="Bennett G.N."/>
            <person name="Koonin E.V."/>
            <person name="Smith D.R."/>
        </authorList>
    </citation>
    <scope>NUCLEOTIDE SEQUENCE [LARGE SCALE GENOMIC DNA]</scope>
    <source>
        <strain>ATCC 824 / DSM 792 / JCM 1419 / IAM 19013 / LMG 5710 / NBRC 13948 / NRRL B-527 / VKM B-1787 / 2291 / W</strain>
    </source>
</reference>
<feature type="chain" id="PRO_0000204946" description="DNA repair protein RecO">
    <location>
        <begin position="1"/>
        <end position="247"/>
    </location>
</feature>
<gene>
    <name type="primary">recO</name>
    <name type="ordered locus">CA_C1309</name>
</gene>
<dbReference type="EMBL" id="AE001437">
    <property type="protein sequence ID" value="AAK79267.1"/>
    <property type="status" value="ALT_INIT"/>
    <property type="molecule type" value="Genomic_DNA"/>
</dbReference>
<dbReference type="PIR" id="H97059">
    <property type="entry name" value="H97059"/>
</dbReference>
<dbReference type="RefSeq" id="NP_347927.1">
    <property type="nucleotide sequence ID" value="NC_003030.1"/>
</dbReference>
<dbReference type="SMR" id="Q97JI4"/>
<dbReference type="STRING" id="272562.CA_C1309"/>
<dbReference type="KEGG" id="cac:CA_C1309"/>
<dbReference type="PATRIC" id="fig|272562.8.peg.1497"/>
<dbReference type="eggNOG" id="COG1381">
    <property type="taxonomic scope" value="Bacteria"/>
</dbReference>
<dbReference type="HOGENOM" id="CLU_066632_3_1_9"/>
<dbReference type="OrthoDB" id="9797083at2"/>
<dbReference type="Proteomes" id="UP000000814">
    <property type="component" value="Chromosome"/>
</dbReference>
<dbReference type="GO" id="GO:0043590">
    <property type="term" value="C:bacterial nucleoid"/>
    <property type="evidence" value="ECO:0007669"/>
    <property type="project" value="TreeGrafter"/>
</dbReference>
<dbReference type="GO" id="GO:0006310">
    <property type="term" value="P:DNA recombination"/>
    <property type="evidence" value="ECO:0007669"/>
    <property type="project" value="UniProtKB-UniRule"/>
</dbReference>
<dbReference type="GO" id="GO:0006302">
    <property type="term" value="P:double-strand break repair"/>
    <property type="evidence" value="ECO:0007669"/>
    <property type="project" value="TreeGrafter"/>
</dbReference>
<dbReference type="Gene3D" id="2.40.50.140">
    <property type="entry name" value="Nucleic acid-binding proteins"/>
    <property type="match status" value="1"/>
</dbReference>
<dbReference type="Gene3D" id="1.20.1440.120">
    <property type="entry name" value="Recombination protein O, C-terminal domain"/>
    <property type="match status" value="1"/>
</dbReference>
<dbReference type="HAMAP" id="MF_00201">
    <property type="entry name" value="RecO"/>
    <property type="match status" value="1"/>
</dbReference>
<dbReference type="InterPro" id="IPR037278">
    <property type="entry name" value="ARFGAP/RecO"/>
</dbReference>
<dbReference type="InterPro" id="IPR022572">
    <property type="entry name" value="DNA_rep/recomb_RecO_N"/>
</dbReference>
<dbReference type="InterPro" id="IPR012340">
    <property type="entry name" value="NA-bd_OB-fold"/>
</dbReference>
<dbReference type="InterPro" id="IPR003717">
    <property type="entry name" value="RecO"/>
</dbReference>
<dbReference type="InterPro" id="IPR042242">
    <property type="entry name" value="RecO_C"/>
</dbReference>
<dbReference type="NCBIfam" id="TIGR00613">
    <property type="entry name" value="reco"/>
    <property type="match status" value="1"/>
</dbReference>
<dbReference type="PANTHER" id="PTHR33991">
    <property type="entry name" value="DNA REPAIR PROTEIN RECO"/>
    <property type="match status" value="1"/>
</dbReference>
<dbReference type="PANTHER" id="PTHR33991:SF1">
    <property type="entry name" value="DNA REPAIR PROTEIN RECO"/>
    <property type="match status" value="1"/>
</dbReference>
<dbReference type="Pfam" id="PF02565">
    <property type="entry name" value="RecO_C"/>
    <property type="match status" value="1"/>
</dbReference>
<dbReference type="Pfam" id="PF11967">
    <property type="entry name" value="RecO_N"/>
    <property type="match status" value="1"/>
</dbReference>
<dbReference type="SUPFAM" id="SSF57863">
    <property type="entry name" value="ArfGap/RecO-like zinc finger"/>
    <property type="match status" value="1"/>
</dbReference>
<dbReference type="SUPFAM" id="SSF50249">
    <property type="entry name" value="Nucleic acid-binding proteins"/>
    <property type="match status" value="1"/>
</dbReference>
<accession>Q97JI4</accession>
<keyword id="KW-0227">DNA damage</keyword>
<keyword id="KW-0233">DNA recombination</keyword>
<keyword id="KW-0234">DNA repair</keyword>
<keyword id="KW-1185">Reference proteome</keyword>
<proteinExistence type="inferred from homology"/>
<protein>
    <recommendedName>
        <fullName>DNA repair protein RecO</fullName>
    </recommendedName>
    <alternativeName>
        <fullName>Recombination protein O</fullName>
    </alternativeName>
</protein>
<evidence type="ECO:0000250" key="1"/>
<evidence type="ECO:0000305" key="2"/>
<name>RECO_CLOAB</name>
<sequence>MALFKSRGVVLKSQDINENDKIIWIFTEKMGKISVIARGAKKNRSKYLPITINFCFGNFVFFKGKSMFSLNEGEIIDSFQEFLSDFDTLTYCSYLCELIDISMAEGESNRDLFKEFVSTFYLIKNKVGDIETLSRAFELKLLRYTGYNLNLDYCSKCKKRINSASYISYKYYGGICGDCSKEGGMSVTPAAYSSLNYLSKLPIEKVYRVNLNDNIKNEMFEILRGFISQNYAKIPKSLDLLNIIKEE</sequence>